<proteinExistence type="inferred from homology"/>
<feature type="chain" id="PRO_0000119414" description="GTP cyclohydrolase 1">
    <location>
        <begin position="1"/>
        <end position="180"/>
    </location>
</feature>
<feature type="binding site" evidence="1">
    <location>
        <position position="71"/>
    </location>
    <ligand>
        <name>Zn(2+)</name>
        <dbReference type="ChEBI" id="CHEBI:29105"/>
    </ligand>
</feature>
<feature type="binding site" evidence="1">
    <location>
        <position position="74"/>
    </location>
    <ligand>
        <name>Zn(2+)</name>
        <dbReference type="ChEBI" id="CHEBI:29105"/>
    </ligand>
</feature>
<feature type="binding site" evidence="1">
    <location>
        <position position="142"/>
    </location>
    <ligand>
        <name>Zn(2+)</name>
        <dbReference type="ChEBI" id="CHEBI:29105"/>
    </ligand>
</feature>
<reference key="1">
    <citation type="journal article" date="1999" name="Nature">
        <title>Genomic sequence comparison of two unrelated isolates of the human gastric pathogen Helicobacter pylori.</title>
        <authorList>
            <person name="Alm R.A."/>
            <person name="Ling L.-S.L."/>
            <person name="Moir D.T."/>
            <person name="King B.L."/>
            <person name="Brown E.D."/>
            <person name="Doig P.C."/>
            <person name="Smith D.R."/>
            <person name="Noonan B."/>
            <person name="Guild B.C."/>
            <person name="deJonge B.L."/>
            <person name="Carmel G."/>
            <person name="Tummino P.J."/>
            <person name="Caruso A."/>
            <person name="Uria-Nickelsen M."/>
            <person name="Mills D.M."/>
            <person name="Ives C."/>
            <person name="Gibson R."/>
            <person name="Merberg D."/>
            <person name="Mills S.D."/>
            <person name="Jiang Q."/>
            <person name="Taylor D.E."/>
            <person name="Vovis G.F."/>
            <person name="Trust T.J."/>
        </authorList>
    </citation>
    <scope>NUCLEOTIDE SEQUENCE [LARGE SCALE GENOMIC DNA]</scope>
    <source>
        <strain>J99 / ATCC 700824</strain>
    </source>
</reference>
<organism>
    <name type="scientific">Helicobacter pylori (strain J99 / ATCC 700824)</name>
    <name type="common">Campylobacter pylori J99</name>
    <dbReference type="NCBI Taxonomy" id="85963"/>
    <lineage>
        <taxon>Bacteria</taxon>
        <taxon>Pseudomonadati</taxon>
        <taxon>Campylobacterota</taxon>
        <taxon>Epsilonproteobacteria</taxon>
        <taxon>Campylobacterales</taxon>
        <taxon>Helicobacteraceae</taxon>
        <taxon>Helicobacter</taxon>
    </lineage>
</organism>
<accession>Q9ZKS2</accession>
<sequence length="180" mass="20903">MEKFFNQFFENIGEDKNREGLKETPKRVQELWKFLYKGYKEDPRVALKSAYFQGVCDEMIVAQNIEFYSTCEHHLLPFFGNISVGYIPKEKIVGISAIAKLIEIYSKRLQIQERLTTQIAETFDEIIEPRGVIVVCEAKHLCMSMQGVQKQNAIIKTSVLRGLFKKDPKTRAEFMQLLKS</sequence>
<protein>
    <recommendedName>
        <fullName>GTP cyclohydrolase 1</fullName>
        <ecNumber>3.5.4.16</ecNumber>
    </recommendedName>
    <alternativeName>
        <fullName>GTP cyclohydrolase I</fullName>
        <shortName>GTP-CH-I</shortName>
    </alternativeName>
</protein>
<dbReference type="EC" id="3.5.4.16"/>
<dbReference type="EMBL" id="AE001439">
    <property type="protein sequence ID" value="AAD06446.1"/>
    <property type="molecule type" value="Genomic_DNA"/>
</dbReference>
<dbReference type="PIR" id="F71878">
    <property type="entry name" value="F71878"/>
</dbReference>
<dbReference type="RefSeq" id="WP_000410405.1">
    <property type="nucleotide sequence ID" value="NC_000921.1"/>
</dbReference>
<dbReference type="SMR" id="Q9ZKS2"/>
<dbReference type="KEGG" id="hpj:jhp_0863"/>
<dbReference type="PATRIC" id="fig|85963.30.peg.100"/>
<dbReference type="eggNOG" id="COG0302">
    <property type="taxonomic scope" value="Bacteria"/>
</dbReference>
<dbReference type="UniPathway" id="UPA00848">
    <property type="reaction ID" value="UER00151"/>
</dbReference>
<dbReference type="Proteomes" id="UP000000804">
    <property type="component" value="Chromosome"/>
</dbReference>
<dbReference type="GO" id="GO:0005737">
    <property type="term" value="C:cytoplasm"/>
    <property type="evidence" value="ECO:0007669"/>
    <property type="project" value="TreeGrafter"/>
</dbReference>
<dbReference type="GO" id="GO:0005525">
    <property type="term" value="F:GTP binding"/>
    <property type="evidence" value="ECO:0007669"/>
    <property type="project" value="UniProtKB-KW"/>
</dbReference>
<dbReference type="GO" id="GO:0003934">
    <property type="term" value="F:GTP cyclohydrolase I activity"/>
    <property type="evidence" value="ECO:0007669"/>
    <property type="project" value="UniProtKB-UniRule"/>
</dbReference>
<dbReference type="GO" id="GO:0008270">
    <property type="term" value="F:zinc ion binding"/>
    <property type="evidence" value="ECO:0007669"/>
    <property type="project" value="UniProtKB-UniRule"/>
</dbReference>
<dbReference type="GO" id="GO:0006730">
    <property type="term" value="P:one-carbon metabolic process"/>
    <property type="evidence" value="ECO:0007669"/>
    <property type="project" value="UniProtKB-UniRule"/>
</dbReference>
<dbReference type="GO" id="GO:0006729">
    <property type="term" value="P:tetrahydrobiopterin biosynthetic process"/>
    <property type="evidence" value="ECO:0007669"/>
    <property type="project" value="TreeGrafter"/>
</dbReference>
<dbReference type="GO" id="GO:0046654">
    <property type="term" value="P:tetrahydrofolate biosynthetic process"/>
    <property type="evidence" value="ECO:0007669"/>
    <property type="project" value="UniProtKB-UniRule"/>
</dbReference>
<dbReference type="FunFam" id="3.30.1130.10:FF:000001">
    <property type="entry name" value="GTP cyclohydrolase 1"/>
    <property type="match status" value="1"/>
</dbReference>
<dbReference type="Gene3D" id="1.10.286.10">
    <property type="match status" value="1"/>
</dbReference>
<dbReference type="Gene3D" id="3.30.1130.10">
    <property type="match status" value="1"/>
</dbReference>
<dbReference type="HAMAP" id="MF_00223">
    <property type="entry name" value="FolE"/>
    <property type="match status" value="1"/>
</dbReference>
<dbReference type="InterPro" id="IPR043133">
    <property type="entry name" value="GTP-CH-I_C/QueF"/>
</dbReference>
<dbReference type="InterPro" id="IPR043134">
    <property type="entry name" value="GTP-CH-I_N"/>
</dbReference>
<dbReference type="InterPro" id="IPR001474">
    <property type="entry name" value="GTP_CycHdrlase_I"/>
</dbReference>
<dbReference type="InterPro" id="IPR018234">
    <property type="entry name" value="GTP_CycHdrlase_I_CS"/>
</dbReference>
<dbReference type="InterPro" id="IPR020602">
    <property type="entry name" value="GTP_CycHdrlase_I_dom"/>
</dbReference>
<dbReference type="NCBIfam" id="TIGR00063">
    <property type="entry name" value="folE"/>
    <property type="match status" value="1"/>
</dbReference>
<dbReference type="NCBIfam" id="NF006825">
    <property type="entry name" value="PRK09347.1-2"/>
    <property type="match status" value="1"/>
</dbReference>
<dbReference type="NCBIfam" id="NF006826">
    <property type="entry name" value="PRK09347.1-3"/>
    <property type="match status" value="1"/>
</dbReference>
<dbReference type="PANTHER" id="PTHR11109:SF7">
    <property type="entry name" value="GTP CYCLOHYDROLASE 1"/>
    <property type="match status" value="1"/>
</dbReference>
<dbReference type="PANTHER" id="PTHR11109">
    <property type="entry name" value="GTP CYCLOHYDROLASE I"/>
    <property type="match status" value="1"/>
</dbReference>
<dbReference type="Pfam" id="PF01227">
    <property type="entry name" value="GTP_cyclohydroI"/>
    <property type="match status" value="1"/>
</dbReference>
<dbReference type="SUPFAM" id="SSF55620">
    <property type="entry name" value="Tetrahydrobiopterin biosynthesis enzymes-like"/>
    <property type="match status" value="1"/>
</dbReference>
<dbReference type="PROSITE" id="PS00859">
    <property type="entry name" value="GTP_CYCLOHYDROL_1_1"/>
    <property type="match status" value="1"/>
</dbReference>
<dbReference type="PROSITE" id="PS00860">
    <property type="entry name" value="GTP_CYCLOHYDROL_1_2"/>
    <property type="match status" value="1"/>
</dbReference>
<evidence type="ECO:0000250" key="1"/>
<evidence type="ECO:0000305" key="2"/>
<name>GCH1_HELPJ</name>
<comment type="catalytic activity">
    <reaction>
        <text>GTP + H2O = 7,8-dihydroneopterin 3'-triphosphate + formate + H(+)</text>
        <dbReference type="Rhea" id="RHEA:17473"/>
        <dbReference type="ChEBI" id="CHEBI:15377"/>
        <dbReference type="ChEBI" id="CHEBI:15378"/>
        <dbReference type="ChEBI" id="CHEBI:15740"/>
        <dbReference type="ChEBI" id="CHEBI:37565"/>
        <dbReference type="ChEBI" id="CHEBI:58462"/>
        <dbReference type="EC" id="3.5.4.16"/>
    </reaction>
</comment>
<comment type="pathway">
    <text>Cofactor biosynthesis; 7,8-dihydroneopterin triphosphate biosynthesis; 7,8-dihydroneopterin triphosphate from GTP: step 1/1.</text>
</comment>
<comment type="subunit">
    <text evidence="1">Toroid-shaped homodecamer, composed of two pentamers of five dimers.</text>
</comment>
<comment type="similarity">
    <text evidence="2">Belongs to the GTP cyclohydrolase I family.</text>
</comment>
<keyword id="KW-0342">GTP-binding</keyword>
<keyword id="KW-0378">Hydrolase</keyword>
<keyword id="KW-0479">Metal-binding</keyword>
<keyword id="KW-0547">Nucleotide-binding</keyword>
<keyword id="KW-0554">One-carbon metabolism</keyword>
<keyword id="KW-0862">Zinc</keyword>
<gene>
    <name type="primary">folE</name>
    <name type="ordered locus">jhp_0863</name>
</gene>